<dbReference type="EMBL" id="KJ734994">
    <property type="protein sequence ID" value="AIE76331.1"/>
    <property type="molecule type" value="mRNA"/>
</dbReference>
<dbReference type="SMR" id="A0A075F932"/>
<dbReference type="GlyCosmos" id="A0A075F932">
    <property type="glycosylation" value="1 site, No reported glycans"/>
</dbReference>
<dbReference type="Proteomes" id="UP000694521">
    <property type="component" value="Unplaced"/>
</dbReference>
<dbReference type="GO" id="GO:0030424">
    <property type="term" value="C:axon"/>
    <property type="evidence" value="ECO:0007669"/>
    <property type="project" value="TreeGrafter"/>
</dbReference>
<dbReference type="GO" id="GO:0042584">
    <property type="term" value="C:chromaffin granule membrane"/>
    <property type="evidence" value="ECO:0007669"/>
    <property type="project" value="UniProtKB-SubCell"/>
</dbReference>
<dbReference type="GO" id="GO:0005737">
    <property type="term" value="C:cytoplasm"/>
    <property type="evidence" value="ECO:0000250"/>
    <property type="project" value="UniProtKB"/>
</dbReference>
<dbReference type="GO" id="GO:0031045">
    <property type="term" value="C:dense core granule"/>
    <property type="evidence" value="ECO:0007669"/>
    <property type="project" value="TreeGrafter"/>
</dbReference>
<dbReference type="GO" id="GO:0005886">
    <property type="term" value="C:plasma membrane"/>
    <property type="evidence" value="ECO:0000250"/>
    <property type="project" value="UniProtKB"/>
</dbReference>
<dbReference type="GO" id="GO:0008021">
    <property type="term" value="C:synaptic vesicle"/>
    <property type="evidence" value="ECO:0000250"/>
    <property type="project" value="UniProtKB"/>
</dbReference>
<dbReference type="GO" id="GO:0030672">
    <property type="term" value="C:synaptic vesicle membrane"/>
    <property type="evidence" value="ECO:0007669"/>
    <property type="project" value="UniProtKB-SubCell"/>
</dbReference>
<dbReference type="GO" id="GO:0005509">
    <property type="term" value="F:calcium ion binding"/>
    <property type="evidence" value="ECO:0000250"/>
    <property type="project" value="UniProtKB"/>
</dbReference>
<dbReference type="GO" id="GO:0005544">
    <property type="term" value="F:calcium-dependent phospholipid binding"/>
    <property type="evidence" value="ECO:0007669"/>
    <property type="project" value="TreeGrafter"/>
</dbReference>
<dbReference type="GO" id="GO:0030276">
    <property type="term" value="F:clathrin binding"/>
    <property type="evidence" value="ECO:0007669"/>
    <property type="project" value="TreeGrafter"/>
</dbReference>
<dbReference type="GO" id="GO:0001786">
    <property type="term" value="F:phosphatidylserine binding"/>
    <property type="evidence" value="ECO:0007669"/>
    <property type="project" value="TreeGrafter"/>
</dbReference>
<dbReference type="GO" id="GO:0005543">
    <property type="term" value="F:phospholipid binding"/>
    <property type="evidence" value="ECO:0000250"/>
    <property type="project" value="UniProtKB"/>
</dbReference>
<dbReference type="GO" id="GO:0000149">
    <property type="term" value="F:SNARE binding"/>
    <property type="evidence" value="ECO:0007669"/>
    <property type="project" value="TreeGrafter"/>
</dbReference>
<dbReference type="GO" id="GO:0048791">
    <property type="term" value="P:calcium ion-regulated exocytosis of neurotransmitter"/>
    <property type="evidence" value="ECO:0007669"/>
    <property type="project" value="TreeGrafter"/>
</dbReference>
<dbReference type="GO" id="GO:0030154">
    <property type="term" value="P:cell differentiation"/>
    <property type="evidence" value="ECO:0007669"/>
    <property type="project" value="UniProtKB-KW"/>
</dbReference>
<dbReference type="GO" id="GO:1903861">
    <property type="term" value="P:positive regulation of dendrite extension"/>
    <property type="evidence" value="ECO:0000250"/>
    <property type="project" value="UniProtKB"/>
</dbReference>
<dbReference type="GO" id="GO:0017158">
    <property type="term" value="P:regulation of calcium ion-dependent exocytosis"/>
    <property type="evidence" value="ECO:0000250"/>
    <property type="project" value="UniProtKB"/>
</dbReference>
<dbReference type="GO" id="GO:0046883">
    <property type="term" value="P:regulation of hormone secretion"/>
    <property type="evidence" value="ECO:0000270"/>
    <property type="project" value="UniProtKB"/>
</dbReference>
<dbReference type="GO" id="GO:1903305">
    <property type="term" value="P:regulation of regulated secretory pathway"/>
    <property type="evidence" value="ECO:0000250"/>
    <property type="project" value="UniProtKB"/>
</dbReference>
<dbReference type="GO" id="GO:0051592">
    <property type="term" value="P:response to calcium ion"/>
    <property type="evidence" value="ECO:0000250"/>
    <property type="project" value="UniProtKB"/>
</dbReference>
<dbReference type="GO" id="GO:0048488">
    <property type="term" value="P:synaptic vesicle endocytosis"/>
    <property type="evidence" value="ECO:0007669"/>
    <property type="project" value="TreeGrafter"/>
</dbReference>
<dbReference type="CDD" id="cd08385">
    <property type="entry name" value="C2A_Synaptotagmin-1-5-6-9-10"/>
    <property type="match status" value="1"/>
</dbReference>
<dbReference type="CDD" id="cd08402">
    <property type="entry name" value="C2B_Synaptotagmin-1"/>
    <property type="match status" value="1"/>
</dbReference>
<dbReference type="CDD" id="cd21963">
    <property type="entry name" value="Syt1_N"/>
    <property type="match status" value="1"/>
</dbReference>
<dbReference type="FunFam" id="2.60.40.150:FF:000007">
    <property type="entry name" value="Synaptotagmin 1"/>
    <property type="match status" value="1"/>
</dbReference>
<dbReference type="FunFam" id="2.60.40.150:FF:000016">
    <property type="entry name" value="Synaptotagmin 1"/>
    <property type="match status" value="1"/>
</dbReference>
<dbReference type="Gene3D" id="2.60.40.150">
    <property type="entry name" value="C2 domain"/>
    <property type="match status" value="2"/>
</dbReference>
<dbReference type="InterPro" id="IPR000008">
    <property type="entry name" value="C2_dom"/>
</dbReference>
<dbReference type="InterPro" id="IPR035892">
    <property type="entry name" value="C2_domain_sf"/>
</dbReference>
<dbReference type="InterPro" id="IPR001565">
    <property type="entry name" value="Synaptotagmin"/>
</dbReference>
<dbReference type="PANTHER" id="PTHR10024">
    <property type="entry name" value="SYNAPTOTAGMIN"/>
    <property type="match status" value="1"/>
</dbReference>
<dbReference type="PANTHER" id="PTHR10024:SF239">
    <property type="entry name" value="SYNAPTOTAGMIN-1"/>
    <property type="match status" value="1"/>
</dbReference>
<dbReference type="Pfam" id="PF00168">
    <property type="entry name" value="C2"/>
    <property type="match status" value="2"/>
</dbReference>
<dbReference type="PRINTS" id="PR00360">
    <property type="entry name" value="C2DOMAIN"/>
</dbReference>
<dbReference type="PRINTS" id="PR00399">
    <property type="entry name" value="SYNAPTOTAGMN"/>
</dbReference>
<dbReference type="SMART" id="SM00239">
    <property type="entry name" value="C2"/>
    <property type="match status" value="2"/>
</dbReference>
<dbReference type="SUPFAM" id="SSF49562">
    <property type="entry name" value="C2 domain (Calcium/lipid-binding domain, CaLB)"/>
    <property type="match status" value="2"/>
</dbReference>
<dbReference type="PROSITE" id="PS50004">
    <property type="entry name" value="C2"/>
    <property type="match status" value="2"/>
</dbReference>
<keyword id="KW-0106">Calcium</keyword>
<keyword id="KW-0963">Cytoplasm</keyword>
<keyword id="KW-0968">Cytoplasmic vesicle</keyword>
<keyword id="KW-0221">Differentiation</keyword>
<keyword id="KW-0325">Glycoprotein</keyword>
<keyword id="KW-0449">Lipoprotein</keyword>
<keyword id="KW-0472">Membrane</keyword>
<keyword id="KW-0479">Metal-binding</keyword>
<keyword id="KW-0564">Palmitate</keyword>
<keyword id="KW-1185">Reference proteome</keyword>
<keyword id="KW-0677">Repeat</keyword>
<keyword id="KW-0770">Synapse</keyword>
<keyword id="KW-0812">Transmembrane</keyword>
<keyword id="KW-1133">Transmembrane helix</keyword>
<sequence length="421" mass="47208">MVSESHHEALAAPPATTVAAAPPSNVTEPASPGGGGGKEDAFSKLKEKFMNELNKIPLPPWALIAIAIVAVLLILTCCFCLCKKCLFKKKNKKKGKEKGGKNAINMKDVKDLGKTMKDQDDDAETGLTDGEEKEEPKEVEKLGKIQYSLDYDFQNNQLLVGIIQAAELPALDMGGTSDPYVKVFLLPDKKKKYETKVHRKTLNPVFNEQFTFKVPYSELGGKTLVMAVYDFDRFSKHDIIGEYKVAMNTVDFGHVTEEWRDLQSAEKEEQEKLGDICFSLRYVPTAGKLTVVILEAKNLKKMDVGGLSDPYVKIHLMQNGKRLKKKKTTIKKNTLNPYYNESFSFEVPFEQIQKVQIVVTVLDYDKIGKNDAIGKVFVGYNSTGAELRHWSDMLANPRRPIAQWHTLQPEEEVDAMLAVKK</sequence>
<reference evidence="11" key="1">
    <citation type="journal article" date="2014" name="Reprod. Biol. Endocrinol.">
        <title>Molecular cloning and expression analysis of the Synaptotagmin-1 gene in the hypothalamus and pituitary of Huoyan goose during different stages of the egg-laying cycle.</title>
        <authorList>
            <person name="Luan X."/>
            <person name="Luo L."/>
            <person name="Cao Z."/>
            <person name="Li R."/>
            <person name="Liu D."/>
            <person name="Gao M."/>
            <person name="Liu M."/>
            <person name="Wang L."/>
        </authorList>
    </citation>
    <scope>NUCLEOTIDE SEQUENCE [MRNA]</scope>
    <scope>FUNCTION</scope>
    <scope>DEVELOPMENTAL STAGE</scope>
    <scope>PHYLOGENETIC ANALYSIS</scope>
</reference>
<reference key="2">
    <citation type="journal article" date="2013" name="Asian-Australas. J. Anim. Sci.">
        <title>Gene expression profiling in the pituitary gland of laying period and ceased period huoyan geese.</title>
        <authorList>
            <person name="Luan X."/>
            <person name="Cao Z."/>
            <person name="Xu W."/>
            <person name="Gao M."/>
            <person name="Wang L."/>
            <person name="Zhang S."/>
        </authorList>
    </citation>
    <scope>DEVELOPMENTAL STAGE</scope>
</reference>
<evidence type="ECO:0000250" key="1">
    <source>
        <dbReference type="UniProtKB" id="P21579"/>
    </source>
</evidence>
<evidence type="ECO:0000250" key="2">
    <source>
        <dbReference type="UniProtKB" id="P21707"/>
    </source>
</evidence>
<evidence type="ECO:0000250" key="3">
    <source>
        <dbReference type="UniProtKB" id="P46096"/>
    </source>
</evidence>
<evidence type="ECO:0000255" key="4"/>
<evidence type="ECO:0000255" key="5">
    <source>
        <dbReference type="PROSITE-ProRule" id="PRU00041"/>
    </source>
</evidence>
<evidence type="ECO:0000255" key="6">
    <source>
        <dbReference type="PROSITE-ProRule" id="PRU00498"/>
    </source>
</evidence>
<evidence type="ECO:0000256" key="7">
    <source>
        <dbReference type="SAM" id="MobiDB-lite"/>
    </source>
</evidence>
<evidence type="ECO:0000269" key="8">
    <source>
    </source>
</evidence>
<evidence type="ECO:0000269" key="9">
    <source>
    </source>
</evidence>
<evidence type="ECO:0000305" key="10"/>
<evidence type="ECO:0000312" key="11">
    <source>
        <dbReference type="EMBL" id="AIE76331.1"/>
    </source>
</evidence>
<name>SYT1_ANSCY</name>
<proteinExistence type="evidence at transcript level"/>
<organism evidence="11">
    <name type="scientific">Anser cygnoides</name>
    <name type="common">Swan goose</name>
    <dbReference type="NCBI Taxonomy" id="8845"/>
    <lineage>
        <taxon>Eukaryota</taxon>
        <taxon>Metazoa</taxon>
        <taxon>Chordata</taxon>
        <taxon>Craniata</taxon>
        <taxon>Vertebrata</taxon>
        <taxon>Euteleostomi</taxon>
        <taxon>Archelosauria</taxon>
        <taxon>Archosauria</taxon>
        <taxon>Dinosauria</taxon>
        <taxon>Saurischia</taxon>
        <taxon>Theropoda</taxon>
        <taxon>Coelurosauria</taxon>
        <taxon>Aves</taxon>
        <taxon>Neognathae</taxon>
        <taxon>Galloanserae</taxon>
        <taxon>Anseriformes</taxon>
        <taxon>Anatidae</taxon>
        <taxon>Anserinae</taxon>
        <taxon>Anser</taxon>
    </lineage>
</organism>
<protein>
    <recommendedName>
        <fullName evidence="11">Synaptotagmin-1</fullName>
    </recommendedName>
    <alternativeName>
        <fullName evidence="1">Synaptotagmin I</fullName>
        <shortName evidence="1">SytI</shortName>
    </alternativeName>
</protein>
<feature type="chain" id="PRO_0000434728" description="Synaptotagmin-1">
    <location>
        <begin position="1"/>
        <end position="421"/>
    </location>
</feature>
<feature type="topological domain" description="Vesicular" evidence="10">
    <location>
        <begin position="1"/>
        <end position="60"/>
    </location>
</feature>
<feature type="transmembrane region" description="Helical" evidence="4">
    <location>
        <begin position="61"/>
        <end position="81"/>
    </location>
</feature>
<feature type="topological domain" description="Cytoplasmic" evidence="10">
    <location>
        <begin position="82"/>
        <end position="421"/>
    </location>
</feature>
<feature type="domain" description="C2 1" evidence="5">
    <location>
        <begin position="141"/>
        <end position="260"/>
    </location>
</feature>
<feature type="domain" description="C2 2" evidence="5">
    <location>
        <begin position="272"/>
        <end position="405"/>
    </location>
</feature>
<feature type="region of interest" description="Disordered" evidence="7">
    <location>
        <begin position="1"/>
        <end position="40"/>
    </location>
</feature>
<feature type="region of interest" description="Disordered" evidence="7">
    <location>
        <begin position="94"/>
        <end position="139"/>
    </location>
</feature>
<feature type="region of interest" description="Phospholipid binding" evidence="2">
    <location>
        <begin position="135"/>
        <end position="381"/>
    </location>
</feature>
<feature type="compositionally biased region" description="Low complexity" evidence="7">
    <location>
        <begin position="10"/>
        <end position="23"/>
    </location>
</feature>
<feature type="compositionally biased region" description="Basic and acidic residues" evidence="7">
    <location>
        <begin position="107"/>
        <end position="118"/>
    </location>
</feature>
<feature type="compositionally biased region" description="Acidic residues" evidence="7">
    <location>
        <begin position="119"/>
        <end position="133"/>
    </location>
</feature>
<feature type="binding site" evidence="5">
    <location>
        <position position="171"/>
    </location>
    <ligand>
        <name>Ca(2+)</name>
        <dbReference type="ChEBI" id="CHEBI:29108"/>
        <label>2</label>
    </ligand>
</feature>
<feature type="binding site" evidence="5">
    <location>
        <position position="172"/>
    </location>
    <ligand>
        <name>Ca(2+)</name>
        <dbReference type="ChEBI" id="CHEBI:29108"/>
        <label>1</label>
    </ligand>
</feature>
<feature type="binding site" evidence="5">
    <location>
        <position position="172"/>
    </location>
    <ligand>
        <name>Ca(2+)</name>
        <dbReference type="ChEBI" id="CHEBI:29108"/>
        <label>2</label>
    </ligand>
</feature>
<feature type="binding site" evidence="5">
    <location>
        <position position="178"/>
    </location>
    <ligand>
        <name>Ca(2+)</name>
        <dbReference type="ChEBI" id="CHEBI:29108"/>
        <label>1</label>
    </ligand>
</feature>
<feature type="binding site" evidence="5">
    <location>
        <position position="230"/>
    </location>
    <ligand>
        <name>Ca(2+)</name>
        <dbReference type="ChEBI" id="CHEBI:29108"/>
        <label>1</label>
    </ligand>
</feature>
<feature type="binding site" evidence="5">
    <location>
        <position position="230"/>
    </location>
    <ligand>
        <name>Ca(2+)</name>
        <dbReference type="ChEBI" id="CHEBI:29108"/>
        <label>2</label>
    </ligand>
</feature>
<feature type="binding site" evidence="5">
    <location>
        <position position="231"/>
    </location>
    <ligand>
        <name>Ca(2+)</name>
        <dbReference type="ChEBI" id="CHEBI:29108"/>
        <label>1</label>
    </ligand>
</feature>
<feature type="binding site" evidence="5">
    <location>
        <position position="232"/>
    </location>
    <ligand>
        <name>Ca(2+)</name>
        <dbReference type="ChEBI" id="CHEBI:29108"/>
        <label>1</label>
    </ligand>
</feature>
<feature type="binding site" evidence="5">
    <location>
        <position position="232"/>
    </location>
    <ligand>
        <name>Ca(2+)</name>
        <dbReference type="ChEBI" id="CHEBI:29108"/>
        <label>2</label>
    </ligand>
</feature>
<feature type="binding site" evidence="5">
    <location>
        <position position="232"/>
    </location>
    <ligand>
        <name>Ca(2+)</name>
        <dbReference type="ChEBI" id="CHEBI:29108"/>
        <label>3</label>
    </ligand>
</feature>
<feature type="binding site" evidence="5">
    <location>
        <position position="235"/>
    </location>
    <ligand>
        <name>Ca(2+)</name>
        <dbReference type="ChEBI" id="CHEBI:29108"/>
        <label>3</label>
    </ligand>
</feature>
<feature type="binding site" evidence="5">
    <location>
        <position position="236"/>
    </location>
    <ligand>
        <name>Ca(2+)</name>
        <dbReference type="ChEBI" id="CHEBI:29108"/>
        <label>3</label>
    </ligand>
</feature>
<feature type="binding site" evidence="5">
    <location>
        <position position="238"/>
    </location>
    <ligand>
        <name>Ca(2+)</name>
        <dbReference type="ChEBI" id="CHEBI:29108"/>
        <label>2</label>
    </ligand>
</feature>
<feature type="binding site" evidence="5">
    <location>
        <position position="238"/>
    </location>
    <ligand>
        <name>Ca(2+)</name>
        <dbReference type="ChEBI" id="CHEBI:29108"/>
        <label>3</label>
    </ligand>
</feature>
<feature type="binding site" evidence="5">
    <location>
        <position position="303"/>
    </location>
    <ligand>
        <name>Ca(2+)</name>
        <dbReference type="ChEBI" id="CHEBI:29108"/>
        <label>4</label>
    </ligand>
</feature>
<feature type="binding site" evidence="5">
    <location>
        <position position="303"/>
    </location>
    <ligand>
        <name>Ca(2+)</name>
        <dbReference type="ChEBI" id="CHEBI:29108"/>
        <label>5</label>
    </ligand>
</feature>
<feature type="binding site" evidence="5">
    <location>
        <position position="309"/>
    </location>
    <ligand>
        <name>Ca(2+)</name>
        <dbReference type="ChEBI" id="CHEBI:29108"/>
        <label>4</label>
    </ligand>
</feature>
<feature type="binding site" evidence="5">
    <location>
        <position position="363"/>
    </location>
    <ligand>
        <name>Ca(2+)</name>
        <dbReference type="ChEBI" id="CHEBI:29108"/>
        <label>4</label>
    </ligand>
</feature>
<feature type="binding site" evidence="5">
    <location>
        <position position="363"/>
    </location>
    <ligand>
        <name>Ca(2+)</name>
        <dbReference type="ChEBI" id="CHEBI:29108"/>
        <label>5</label>
    </ligand>
</feature>
<feature type="binding site" evidence="5">
    <location>
        <position position="365"/>
    </location>
    <ligand>
        <name>Ca(2+)</name>
        <dbReference type="ChEBI" id="CHEBI:29108"/>
        <label>4</label>
    </ligand>
</feature>
<feature type="binding site" evidence="5">
    <location>
        <position position="365"/>
    </location>
    <ligand>
        <name>Ca(2+)</name>
        <dbReference type="ChEBI" id="CHEBI:29108"/>
        <label>5</label>
    </ligand>
</feature>
<feature type="binding site" evidence="5">
    <location>
        <position position="371"/>
    </location>
    <ligand>
        <name>Ca(2+)</name>
        <dbReference type="ChEBI" id="CHEBI:29108"/>
        <label>5</label>
    </ligand>
</feature>
<feature type="lipid moiety-binding region" description="S-palmitoyl cysteine" evidence="2">
    <location>
        <position position="77"/>
    </location>
</feature>
<feature type="lipid moiety-binding region" description="S-palmitoyl cysteine" evidence="2">
    <location>
        <position position="78"/>
    </location>
</feature>
<feature type="lipid moiety-binding region" description="S-palmitoyl cysteine" evidence="2">
    <location>
        <position position="80"/>
    </location>
</feature>
<feature type="lipid moiety-binding region" description="S-palmitoyl cysteine" evidence="2">
    <location>
        <position position="82"/>
    </location>
</feature>
<feature type="lipid moiety-binding region" description="S-palmitoyl cysteine" evidence="2">
    <location>
        <position position="85"/>
    </location>
</feature>
<feature type="glycosylation site" description="N-linked (GlcNAc...) asparagine" evidence="6">
    <location>
        <position position="25"/>
    </location>
</feature>
<accession>A0A075F932</accession>
<gene>
    <name evidence="11" type="primary">SYT1</name>
</gene>
<comment type="function">
    <text evidence="1 3 9">Calcium sensor that participates in triggering neurotransmitter release at the synapse (By similarity). May have a regulatory role in the membrane interactions during trafficking of synaptic vesicles at the active zone of the synapse. It binds acidic phospholipids with a specificity that requires the presence of both an acidic head group and a diacyl backbone. May play a role in dendrite formation by melanocytes (By similarity). May play a role in regulating the secretion of hormones relevant to the reproduction and egg-laying of female geese (PubMed:25146222).</text>
</comment>
<comment type="cofactor">
    <cofactor evidence="5">
        <name>Ca(2+)</name>
        <dbReference type="ChEBI" id="CHEBI:29108"/>
    </cofactor>
    <text evidence="2">Binds 3 Ca(2+) ions per subunit. The ions are bound to the C2 domains.</text>
</comment>
<comment type="subunit">
    <text evidence="2">Homotetramer (Probable).</text>
</comment>
<comment type="subcellular location">
    <subcellularLocation>
        <location evidence="2">Cytoplasmic vesicle</location>
        <location evidence="2">Secretory vesicle membrane</location>
        <topology evidence="4">Single-pass membrane protein</topology>
    </subcellularLocation>
    <subcellularLocation>
        <location evidence="2">Cytoplasmic vesicle</location>
        <location evidence="2">Secretory vesicle</location>
        <location evidence="2">Synaptic vesicle membrane</location>
        <topology evidence="2">Single-pass membrane protein</topology>
    </subcellularLocation>
    <subcellularLocation>
        <location evidence="2">Cytoplasmic vesicle</location>
        <location evidence="2">Secretory vesicle</location>
        <location evidence="2">Chromaffin granule membrane</location>
        <topology evidence="2">Single-pass membrane protein</topology>
    </subcellularLocation>
    <subcellularLocation>
        <location evidence="2">Cytoplasm</location>
    </subcellularLocation>
    <text evidence="2">Synaptic vesicles and chromaffin granules.</text>
</comment>
<comment type="developmental stage">
    <text evidence="8 9">Expressed during egg-laying cycle in the hypothalamus and pituitary. Expression increases from the pre-laying period to the peak laying period reaching its highest level in the peak laying period and then decreases in the ceased period (PubMed:25146222). Expression is up-regulated in the pituitary gland during egg-laying period and down-regulated during ceased period (PubMed:25049869).</text>
</comment>
<comment type="domain">
    <text evidence="2">The first C2 domain mediates Ca(2+)-dependent phospholipid binding.</text>
</comment>
<comment type="domain">
    <text evidence="2">The second C2 domain mediates interaction with SV2A and probably with STN2.</text>
</comment>
<comment type="similarity">
    <text evidence="10">Belongs to the synaptotagmin family.</text>
</comment>